<proteinExistence type="inferred from homology"/>
<comment type="function">
    <text evidence="1">Part of the ABC transporter complex PstSACB involved in phosphate import. Responsible for energy coupling to the transport system.</text>
</comment>
<comment type="catalytic activity">
    <reaction evidence="1">
        <text>phosphate(out) + ATP + H2O = ADP + 2 phosphate(in) + H(+)</text>
        <dbReference type="Rhea" id="RHEA:24440"/>
        <dbReference type="ChEBI" id="CHEBI:15377"/>
        <dbReference type="ChEBI" id="CHEBI:15378"/>
        <dbReference type="ChEBI" id="CHEBI:30616"/>
        <dbReference type="ChEBI" id="CHEBI:43474"/>
        <dbReference type="ChEBI" id="CHEBI:456216"/>
        <dbReference type="EC" id="7.3.2.1"/>
    </reaction>
</comment>
<comment type="subunit">
    <text evidence="1">The complex is composed of two ATP-binding proteins (PstB), two transmembrane proteins (PstC and PstA) and a solute-binding protein (PstS).</text>
</comment>
<comment type="subcellular location">
    <subcellularLocation>
        <location evidence="1">Cell inner membrane</location>
        <topology evidence="1">Peripheral membrane protein</topology>
    </subcellularLocation>
</comment>
<comment type="similarity">
    <text evidence="1">Belongs to the ABC transporter superfamily. Phosphate importer (TC 3.A.1.7) family.</text>
</comment>
<dbReference type="EC" id="7.3.2.1" evidence="1"/>
<dbReference type="EMBL" id="CP000158">
    <property type="protein sequence ID" value="ABI77853.1"/>
    <property type="molecule type" value="Genomic_DNA"/>
</dbReference>
<dbReference type="RefSeq" id="WP_011647027.1">
    <property type="nucleotide sequence ID" value="NC_008358.1"/>
</dbReference>
<dbReference type="SMR" id="Q0C0L5"/>
<dbReference type="STRING" id="228405.HNE_2030"/>
<dbReference type="KEGG" id="hne:HNE_2030"/>
<dbReference type="eggNOG" id="COG1117">
    <property type="taxonomic scope" value="Bacteria"/>
</dbReference>
<dbReference type="HOGENOM" id="CLU_000604_1_22_5"/>
<dbReference type="Proteomes" id="UP000001959">
    <property type="component" value="Chromosome"/>
</dbReference>
<dbReference type="GO" id="GO:0005886">
    <property type="term" value="C:plasma membrane"/>
    <property type="evidence" value="ECO:0007669"/>
    <property type="project" value="UniProtKB-SubCell"/>
</dbReference>
<dbReference type="GO" id="GO:0005524">
    <property type="term" value="F:ATP binding"/>
    <property type="evidence" value="ECO:0007669"/>
    <property type="project" value="UniProtKB-KW"/>
</dbReference>
<dbReference type="GO" id="GO:0016887">
    <property type="term" value="F:ATP hydrolysis activity"/>
    <property type="evidence" value="ECO:0007669"/>
    <property type="project" value="InterPro"/>
</dbReference>
<dbReference type="GO" id="GO:0015415">
    <property type="term" value="F:ATPase-coupled phosphate ion transmembrane transporter activity"/>
    <property type="evidence" value="ECO:0007669"/>
    <property type="project" value="UniProtKB-EC"/>
</dbReference>
<dbReference type="GO" id="GO:0035435">
    <property type="term" value="P:phosphate ion transmembrane transport"/>
    <property type="evidence" value="ECO:0007669"/>
    <property type="project" value="InterPro"/>
</dbReference>
<dbReference type="CDD" id="cd03260">
    <property type="entry name" value="ABC_PstB_phosphate_transporter"/>
    <property type="match status" value="1"/>
</dbReference>
<dbReference type="FunFam" id="3.40.50.300:FF:000132">
    <property type="entry name" value="Phosphate import ATP-binding protein PstB"/>
    <property type="match status" value="1"/>
</dbReference>
<dbReference type="Gene3D" id="3.40.50.300">
    <property type="entry name" value="P-loop containing nucleotide triphosphate hydrolases"/>
    <property type="match status" value="1"/>
</dbReference>
<dbReference type="InterPro" id="IPR003593">
    <property type="entry name" value="AAA+_ATPase"/>
</dbReference>
<dbReference type="InterPro" id="IPR003439">
    <property type="entry name" value="ABC_transporter-like_ATP-bd"/>
</dbReference>
<dbReference type="InterPro" id="IPR017871">
    <property type="entry name" value="ABC_transporter-like_CS"/>
</dbReference>
<dbReference type="InterPro" id="IPR027417">
    <property type="entry name" value="P-loop_NTPase"/>
</dbReference>
<dbReference type="InterPro" id="IPR005670">
    <property type="entry name" value="PstB-like"/>
</dbReference>
<dbReference type="NCBIfam" id="TIGR00972">
    <property type="entry name" value="3a0107s01c2"/>
    <property type="match status" value="1"/>
</dbReference>
<dbReference type="PANTHER" id="PTHR43423">
    <property type="entry name" value="ABC TRANSPORTER I FAMILY MEMBER 17"/>
    <property type="match status" value="1"/>
</dbReference>
<dbReference type="PANTHER" id="PTHR43423:SF1">
    <property type="entry name" value="ABC TRANSPORTER I FAMILY MEMBER 17"/>
    <property type="match status" value="1"/>
</dbReference>
<dbReference type="Pfam" id="PF00005">
    <property type="entry name" value="ABC_tran"/>
    <property type="match status" value="1"/>
</dbReference>
<dbReference type="SMART" id="SM00382">
    <property type="entry name" value="AAA"/>
    <property type="match status" value="1"/>
</dbReference>
<dbReference type="SUPFAM" id="SSF52540">
    <property type="entry name" value="P-loop containing nucleoside triphosphate hydrolases"/>
    <property type="match status" value="1"/>
</dbReference>
<dbReference type="PROSITE" id="PS00211">
    <property type="entry name" value="ABC_TRANSPORTER_1"/>
    <property type="match status" value="1"/>
</dbReference>
<dbReference type="PROSITE" id="PS50893">
    <property type="entry name" value="ABC_TRANSPORTER_2"/>
    <property type="match status" value="1"/>
</dbReference>
<dbReference type="PROSITE" id="PS51238">
    <property type="entry name" value="PSTB"/>
    <property type="match status" value="1"/>
</dbReference>
<feature type="chain" id="PRO_0000272461" description="Phosphate import ATP-binding protein PstB">
    <location>
        <begin position="1"/>
        <end position="275"/>
    </location>
</feature>
<feature type="domain" description="ABC transporter" evidence="1">
    <location>
        <begin position="28"/>
        <end position="270"/>
    </location>
</feature>
<feature type="binding site" evidence="1">
    <location>
        <begin position="60"/>
        <end position="67"/>
    </location>
    <ligand>
        <name>ATP</name>
        <dbReference type="ChEBI" id="CHEBI:30616"/>
    </ligand>
</feature>
<evidence type="ECO:0000255" key="1">
    <source>
        <dbReference type="HAMAP-Rule" id="MF_01702"/>
    </source>
</evidence>
<name>PSTB_HYPNA</name>
<organism>
    <name type="scientific">Hyphomonas neptunium (strain ATCC 15444)</name>
    <dbReference type="NCBI Taxonomy" id="228405"/>
    <lineage>
        <taxon>Bacteria</taxon>
        <taxon>Pseudomonadati</taxon>
        <taxon>Pseudomonadota</taxon>
        <taxon>Alphaproteobacteria</taxon>
        <taxon>Hyphomonadales</taxon>
        <taxon>Hyphomonadaceae</taxon>
        <taxon>Hyphomonas</taxon>
    </lineage>
</organism>
<sequence>MDTDHRPQAEGAVLTPSAEAPPVAAPRIDCRDIRVFYGADQAIHNVSLSFPDRAVTALIGPSGCGKSTFLRCLNRMNDTIENCRVEGQILMDGQDINDHSIDPVLLRSRVGMVFQKPNPFPKSIYDNIAYGPRIHGLASSREDLDAIVEKSLRRAGLWEEVKDRLQAPGTSLSGGQQQRLCIARAIAVRPEVILMDEPCSALDPVATARIEELIDELRKRYCIVIVTHSMQQAARVSQRTAFFHLGNLIEMGETEQIFTNPREKRTEDYITGRFG</sequence>
<reference key="1">
    <citation type="journal article" date="2006" name="J. Bacteriol.">
        <title>Comparative genomic evidence for a close relationship between the dimorphic prosthecate bacteria Hyphomonas neptunium and Caulobacter crescentus.</title>
        <authorList>
            <person name="Badger J.H."/>
            <person name="Hoover T.R."/>
            <person name="Brun Y.V."/>
            <person name="Weiner R.M."/>
            <person name="Laub M.T."/>
            <person name="Alexandre G."/>
            <person name="Mrazek J."/>
            <person name="Ren Q."/>
            <person name="Paulsen I.T."/>
            <person name="Nelson K.E."/>
            <person name="Khouri H.M."/>
            <person name="Radune D."/>
            <person name="Sosa J."/>
            <person name="Dodson R.J."/>
            <person name="Sullivan S.A."/>
            <person name="Rosovitz M.J."/>
            <person name="Madupu R."/>
            <person name="Brinkac L.M."/>
            <person name="Durkin A.S."/>
            <person name="Daugherty S.C."/>
            <person name="Kothari S.P."/>
            <person name="Giglio M.G."/>
            <person name="Zhou L."/>
            <person name="Haft D.H."/>
            <person name="Selengut J.D."/>
            <person name="Davidsen T.M."/>
            <person name="Yang Q."/>
            <person name="Zafar N."/>
            <person name="Ward N.L."/>
        </authorList>
    </citation>
    <scope>NUCLEOTIDE SEQUENCE [LARGE SCALE GENOMIC DNA]</scope>
    <source>
        <strain>ATCC 15444</strain>
    </source>
</reference>
<keyword id="KW-0067">ATP-binding</keyword>
<keyword id="KW-0997">Cell inner membrane</keyword>
<keyword id="KW-1003">Cell membrane</keyword>
<keyword id="KW-0472">Membrane</keyword>
<keyword id="KW-0547">Nucleotide-binding</keyword>
<keyword id="KW-0592">Phosphate transport</keyword>
<keyword id="KW-1185">Reference proteome</keyword>
<keyword id="KW-1278">Translocase</keyword>
<keyword id="KW-0813">Transport</keyword>
<gene>
    <name evidence="1" type="primary">pstB</name>
    <name type="ordered locus">HNE_2030</name>
</gene>
<protein>
    <recommendedName>
        <fullName evidence="1">Phosphate import ATP-binding protein PstB</fullName>
        <ecNumber evidence="1">7.3.2.1</ecNumber>
    </recommendedName>
    <alternativeName>
        <fullName evidence="1">ABC phosphate transporter</fullName>
    </alternativeName>
    <alternativeName>
        <fullName evidence="1">Phosphate-transporting ATPase</fullName>
    </alternativeName>
</protein>
<accession>Q0C0L5</accession>